<organism>
    <name type="scientific">Pseudomonas putida (strain ATCC 47054 / DSM 6125 / CFBP 8728 / NCIMB 11950 / KT2440)</name>
    <dbReference type="NCBI Taxonomy" id="160488"/>
    <lineage>
        <taxon>Bacteria</taxon>
        <taxon>Pseudomonadati</taxon>
        <taxon>Pseudomonadota</taxon>
        <taxon>Gammaproteobacteria</taxon>
        <taxon>Pseudomonadales</taxon>
        <taxon>Pseudomonadaceae</taxon>
        <taxon>Pseudomonas</taxon>
    </lineage>
</organism>
<feature type="chain" id="PRO_0000163336" description="Ribosome maturation factor RimM">
    <location>
        <begin position="1"/>
        <end position="178"/>
    </location>
</feature>
<feature type="domain" description="PRC barrel" evidence="1">
    <location>
        <begin position="101"/>
        <end position="178"/>
    </location>
</feature>
<gene>
    <name evidence="1" type="primary">rimM</name>
    <name type="ordered locus">PP_1463</name>
</gene>
<proteinExistence type="inferred from homology"/>
<accession>Q88MV5</accession>
<sequence>MNATPEKADDLIVVGKIFSVHGVRGEVKVYSFTDPIENLLDYPRWTLRHEGKVKQVELVSGRGSQKGLVVKLKGLDDRDEARLLSGYEICIPRSLLPNLAADEYYWYQLVGLKVINQDEQLFGKVDHLLETGANDVMVVKPCAGSLDDRERLLPYTEQCVLAIDLEAGVMRVEWDADF</sequence>
<name>RIMM_PSEPK</name>
<reference key="1">
    <citation type="journal article" date="2002" name="Environ. Microbiol.">
        <title>Complete genome sequence and comparative analysis of the metabolically versatile Pseudomonas putida KT2440.</title>
        <authorList>
            <person name="Nelson K.E."/>
            <person name="Weinel C."/>
            <person name="Paulsen I.T."/>
            <person name="Dodson R.J."/>
            <person name="Hilbert H."/>
            <person name="Martins dos Santos V.A.P."/>
            <person name="Fouts D.E."/>
            <person name="Gill S.R."/>
            <person name="Pop M."/>
            <person name="Holmes M."/>
            <person name="Brinkac L.M."/>
            <person name="Beanan M.J."/>
            <person name="DeBoy R.T."/>
            <person name="Daugherty S.C."/>
            <person name="Kolonay J.F."/>
            <person name="Madupu R."/>
            <person name="Nelson W.C."/>
            <person name="White O."/>
            <person name="Peterson J.D."/>
            <person name="Khouri H.M."/>
            <person name="Hance I."/>
            <person name="Chris Lee P."/>
            <person name="Holtzapple E.K."/>
            <person name="Scanlan D."/>
            <person name="Tran K."/>
            <person name="Moazzez A."/>
            <person name="Utterback T.R."/>
            <person name="Rizzo M."/>
            <person name="Lee K."/>
            <person name="Kosack D."/>
            <person name="Moestl D."/>
            <person name="Wedler H."/>
            <person name="Lauber J."/>
            <person name="Stjepandic D."/>
            <person name="Hoheisel J."/>
            <person name="Straetz M."/>
            <person name="Heim S."/>
            <person name="Kiewitz C."/>
            <person name="Eisen J.A."/>
            <person name="Timmis K.N."/>
            <person name="Duesterhoeft A."/>
            <person name="Tuemmler B."/>
            <person name="Fraser C.M."/>
        </authorList>
    </citation>
    <scope>NUCLEOTIDE SEQUENCE [LARGE SCALE GENOMIC DNA]</scope>
    <source>
        <strain>ATCC 47054 / DSM 6125 / CFBP 8728 / NCIMB 11950 / KT2440</strain>
    </source>
</reference>
<protein>
    <recommendedName>
        <fullName evidence="1">Ribosome maturation factor RimM</fullName>
    </recommendedName>
</protein>
<dbReference type="EMBL" id="AE015451">
    <property type="protein sequence ID" value="AAN67085.1"/>
    <property type="molecule type" value="Genomic_DNA"/>
</dbReference>
<dbReference type="RefSeq" id="NP_743621.1">
    <property type="nucleotide sequence ID" value="NC_002947.4"/>
</dbReference>
<dbReference type="RefSeq" id="WP_003252144.1">
    <property type="nucleotide sequence ID" value="NZ_CP169744.1"/>
</dbReference>
<dbReference type="SMR" id="Q88MV5"/>
<dbReference type="STRING" id="160488.PP_1463"/>
<dbReference type="PaxDb" id="160488-PP_1463"/>
<dbReference type="GeneID" id="83682002"/>
<dbReference type="KEGG" id="ppu:PP_1463"/>
<dbReference type="PATRIC" id="fig|160488.4.peg.1553"/>
<dbReference type="eggNOG" id="COG0806">
    <property type="taxonomic scope" value="Bacteria"/>
</dbReference>
<dbReference type="HOGENOM" id="CLU_077636_1_0_6"/>
<dbReference type="OrthoDB" id="9783509at2"/>
<dbReference type="PhylomeDB" id="Q88MV5"/>
<dbReference type="BioCyc" id="PPUT160488:G1G01-1555-MONOMER"/>
<dbReference type="Proteomes" id="UP000000556">
    <property type="component" value="Chromosome"/>
</dbReference>
<dbReference type="GO" id="GO:0005737">
    <property type="term" value="C:cytoplasm"/>
    <property type="evidence" value="ECO:0007669"/>
    <property type="project" value="UniProtKB-SubCell"/>
</dbReference>
<dbReference type="GO" id="GO:0005840">
    <property type="term" value="C:ribosome"/>
    <property type="evidence" value="ECO:0007669"/>
    <property type="project" value="InterPro"/>
</dbReference>
<dbReference type="GO" id="GO:0043022">
    <property type="term" value="F:ribosome binding"/>
    <property type="evidence" value="ECO:0007669"/>
    <property type="project" value="InterPro"/>
</dbReference>
<dbReference type="GO" id="GO:0042274">
    <property type="term" value="P:ribosomal small subunit biogenesis"/>
    <property type="evidence" value="ECO:0007669"/>
    <property type="project" value="UniProtKB-UniRule"/>
</dbReference>
<dbReference type="GO" id="GO:0006364">
    <property type="term" value="P:rRNA processing"/>
    <property type="evidence" value="ECO:0007669"/>
    <property type="project" value="UniProtKB-UniRule"/>
</dbReference>
<dbReference type="Gene3D" id="2.30.30.240">
    <property type="entry name" value="PRC-barrel domain"/>
    <property type="match status" value="1"/>
</dbReference>
<dbReference type="Gene3D" id="2.40.30.60">
    <property type="entry name" value="RimM"/>
    <property type="match status" value="1"/>
</dbReference>
<dbReference type="HAMAP" id="MF_00014">
    <property type="entry name" value="Ribosome_mat_RimM"/>
    <property type="match status" value="1"/>
</dbReference>
<dbReference type="InterPro" id="IPR011033">
    <property type="entry name" value="PRC_barrel-like_sf"/>
</dbReference>
<dbReference type="InterPro" id="IPR056792">
    <property type="entry name" value="PRC_RimM"/>
</dbReference>
<dbReference type="InterPro" id="IPR011961">
    <property type="entry name" value="RimM"/>
</dbReference>
<dbReference type="InterPro" id="IPR002676">
    <property type="entry name" value="RimM_N"/>
</dbReference>
<dbReference type="InterPro" id="IPR036976">
    <property type="entry name" value="RimM_N_sf"/>
</dbReference>
<dbReference type="InterPro" id="IPR009000">
    <property type="entry name" value="Transl_B-barrel_sf"/>
</dbReference>
<dbReference type="NCBIfam" id="TIGR02273">
    <property type="entry name" value="16S_RimM"/>
    <property type="match status" value="1"/>
</dbReference>
<dbReference type="PANTHER" id="PTHR33692">
    <property type="entry name" value="RIBOSOME MATURATION FACTOR RIMM"/>
    <property type="match status" value="1"/>
</dbReference>
<dbReference type="PANTHER" id="PTHR33692:SF1">
    <property type="entry name" value="RIBOSOME MATURATION FACTOR RIMM"/>
    <property type="match status" value="1"/>
</dbReference>
<dbReference type="Pfam" id="PF24986">
    <property type="entry name" value="PRC_RimM"/>
    <property type="match status" value="1"/>
</dbReference>
<dbReference type="Pfam" id="PF01782">
    <property type="entry name" value="RimM"/>
    <property type="match status" value="1"/>
</dbReference>
<dbReference type="SUPFAM" id="SSF50346">
    <property type="entry name" value="PRC-barrel domain"/>
    <property type="match status" value="1"/>
</dbReference>
<dbReference type="SUPFAM" id="SSF50447">
    <property type="entry name" value="Translation proteins"/>
    <property type="match status" value="1"/>
</dbReference>
<keyword id="KW-0143">Chaperone</keyword>
<keyword id="KW-0963">Cytoplasm</keyword>
<keyword id="KW-1185">Reference proteome</keyword>
<keyword id="KW-0690">Ribosome biogenesis</keyword>
<keyword id="KW-0698">rRNA processing</keyword>
<evidence type="ECO:0000255" key="1">
    <source>
        <dbReference type="HAMAP-Rule" id="MF_00014"/>
    </source>
</evidence>
<comment type="function">
    <text evidence="1">An accessory protein needed during the final step in the assembly of 30S ribosomal subunit, possibly for assembly of the head region. Essential for efficient processing of 16S rRNA. May be needed both before and after RbfA during the maturation of 16S rRNA. It has affinity for free ribosomal 30S subunits but not for 70S ribosomes.</text>
</comment>
<comment type="subunit">
    <text evidence="1">Binds ribosomal protein uS19.</text>
</comment>
<comment type="subcellular location">
    <subcellularLocation>
        <location evidence="1">Cytoplasm</location>
    </subcellularLocation>
</comment>
<comment type="domain">
    <text evidence="1">The PRC barrel domain binds ribosomal protein uS19.</text>
</comment>
<comment type="similarity">
    <text evidence="1">Belongs to the RimM family.</text>
</comment>